<keyword id="KW-0408">Iron</keyword>
<keyword id="KW-0479">Metal-binding</keyword>
<keyword id="KW-0496">Mitochondrion</keyword>
<keyword id="KW-0520">NAD</keyword>
<keyword id="KW-0560">Oxidoreductase</keyword>
<keyword id="KW-1185">Reference proteome</keyword>
<keyword id="KW-0809">Transit peptide</keyword>
<keyword id="KW-0862">Zinc</keyword>
<accession>Q09669</accession>
<gene>
    <name type="primary">adh4</name>
    <name type="ORF">SPAC5H10.06c</name>
</gene>
<name>ADH4_SCHPO</name>
<evidence type="ECO:0000250" key="1"/>
<evidence type="ECO:0000250" key="2">
    <source>
        <dbReference type="UniProtKB" id="P0DJA2"/>
    </source>
</evidence>
<evidence type="ECO:0000255" key="3"/>
<evidence type="ECO:0000269" key="4">
    <source>
    </source>
</evidence>
<evidence type="ECO:0000269" key="5">
    <source>
    </source>
</evidence>
<evidence type="ECO:0000269" key="6">
    <source>
    </source>
</evidence>
<evidence type="ECO:0000269" key="7">
    <source>
    </source>
</evidence>
<evidence type="ECO:0000305" key="8"/>
<evidence type="ECO:0000305" key="9">
    <source>
    </source>
</evidence>
<evidence type="ECO:0000305" key="10">
    <source>
    </source>
</evidence>
<dbReference type="EC" id="1.1.1.1" evidence="4 6"/>
<dbReference type="EMBL" id="CU329670">
    <property type="protein sequence ID" value="CAA89956.1"/>
    <property type="molecule type" value="Genomic_DNA"/>
</dbReference>
<dbReference type="PIR" id="S55484">
    <property type="entry name" value="S55484"/>
</dbReference>
<dbReference type="RefSeq" id="NP_592819.1">
    <property type="nucleotide sequence ID" value="NM_001018219.2"/>
</dbReference>
<dbReference type="SMR" id="Q09669"/>
<dbReference type="BioGRID" id="279167">
    <property type="interactions" value="24"/>
</dbReference>
<dbReference type="FunCoup" id="Q09669">
    <property type="interactions" value="88"/>
</dbReference>
<dbReference type="STRING" id="284812.Q09669"/>
<dbReference type="PaxDb" id="4896-SPAC5H10.06c.1"/>
<dbReference type="GeneID" id="2542714"/>
<dbReference type="KEGG" id="spo:2542714"/>
<dbReference type="PomBase" id="SPAC5H10.06c">
    <property type="gene designation" value="adh4"/>
</dbReference>
<dbReference type="eggNOG" id="KOG3857">
    <property type="taxonomic scope" value="Eukaryota"/>
</dbReference>
<dbReference type="InParanoid" id="Q09669"/>
<dbReference type="OMA" id="DACMITN"/>
<dbReference type="PhylomeDB" id="Q09669"/>
<dbReference type="BRENDA" id="1.1.1.1">
    <property type="organism ID" value="5613"/>
</dbReference>
<dbReference type="PRO" id="PR:Q09669"/>
<dbReference type="Proteomes" id="UP000002485">
    <property type="component" value="Chromosome I"/>
</dbReference>
<dbReference type="GO" id="GO:0005759">
    <property type="term" value="C:mitochondrial matrix"/>
    <property type="evidence" value="ECO:0007669"/>
    <property type="project" value="UniProtKB-SubCell"/>
</dbReference>
<dbReference type="GO" id="GO:0005739">
    <property type="term" value="C:mitochondrion"/>
    <property type="evidence" value="ECO:0007005"/>
    <property type="project" value="PomBase"/>
</dbReference>
<dbReference type="GO" id="GO:0004022">
    <property type="term" value="F:alcohol dehydrogenase (NAD+) activity"/>
    <property type="evidence" value="ECO:0000318"/>
    <property type="project" value="GO_Central"/>
</dbReference>
<dbReference type="GO" id="GO:0120542">
    <property type="term" value="F:ethanol dehydrogenase (NAD+) activity"/>
    <property type="evidence" value="ECO:0000315"/>
    <property type="project" value="PomBase"/>
</dbReference>
<dbReference type="GO" id="GO:0046872">
    <property type="term" value="F:metal ion binding"/>
    <property type="evidence" value="ECO:0007669"/>
    <property type="project" value="UniProtKB-KW"/>
</dbReference>
<dbReference type="GO" id="GO:0019655">
    <property type="term" value="P:glycolytic fermentation to ethanol"/>
    <property type="evidence" value="ECO:0000316"/>
    <property type="project" value="PomBase"/>
</dbReference>
<dbReference type="CDD" id="cd08188">
    <property type="entry name" value="PDDH"/>
    <property type="match status" value="1"/>
</dbReference>
<dbReference type="FunFam" id="3.40.50.1970:FF:000003">
    <property type="entry name" value="Alcohol dehydrogenase, iron-containing"/>
    <property type="match status" value="1"/>
</dbReference>
<dbReference type="FunFam" id="1.20.1090.10:FF:000001">
    <property type="entry name" value="Aldehyde-alcohol dehydrogenase"/>
    <property type="match status" value="1"/>
</dbReference>
<dbReference type="Gene3D" id="3.40.50.1970">
    <property type="match status" value="1"/>
</dbReference>
<dbReference type="Gene3D" id="1.20.1090.10">
    <property type="entry name" value="Dehydroquinate synthase-like - alpha domain"/>
    <property type="match status" value="1"/>
</dbReference>
<dbReference type="InterPro" id="IPR001670">
    <property type="entry name" value="ADH_Fe/GldA"/>
</dbReference>
<dbReference type="InterPro" id="IPR056798">
    <property type="entry name" value="ADH_Fe_C"/>
</dbReference>
<dbReference type="InterPro" id="IPR018211">
    <property type="entry name" value="ADH_Fe_CS"/>
</dbReference>
<dbReference type="InterPro" id="IPR039697">
    <property type="entry name" value="Alcohol_dehydrogenase_Fe"/>
</dbReference>
<dbReference type="PANTHER" id="PTHR11496">
    <property type="entry name" value="ALCOHOL DEHYDROGENASE"/>
    <property type="match status" value="1"/>
</dbReference>
<dbReference type="PANTHER" id="PTHR11496:SF102">
    <property type="entry name" value="ALCOHOL DEHYDROGENASE 4"/>
    <property type="match status" value="1"/>
</dbReference>
<dbReference type="Pfam" id="PF25137">
    <property type="entry name" value="ADH_Fe_C"/>
    <property type="match status" value="1"/>
</dbReference>
<dbReference type="Pfam" id="PF00465">
    <property type="entry name" value="Fe-ADH"/>
    <property type="match status" value="1"/>
</dbReference>
<dbReference type="SUPFAM" id="SSF56796">
    <property type="entry name" value="Dehydroquinate synthase-like"/>
    <property type="match status" value="1"/>
</dbReference>
<dbReference type="PROSITE" id="PS00913">
    <property type="entry name" value="ADH_IRON_1"/>
    <property type="match status" value="1"/>
</dbReference>
<dbReference type="PROSITE" id="PS00060">
    <property type="entry name" value="ADH_IRON_2"/>
    <property type="match status" value="1"/>
</dbReference>
<protein>
    <recommendedName>
        <fullName evidence="8">Alcohol dehydrogenase 4</fullName>
        <ecNumber evidence="4 6">1.1.1.1</ecNumber>
    </recommendedName>
    <alternativeName>
        <fullName>Alcohol dehydrogenase IV</fullName>
    </alternativeName>
</protein>
<proteinExistence type="evidence at protein level"/>
<sequence>MSILRSPFRLIRSPARFFPSLFHSSCNQSFTNGLKHQSTSSKAMPVSAFYIPSFNLFGKGCLAEAAKQIKMSGFKNTLIVTDPGIIKVGLYDKVKALLEEQSITVHLYDGVQPNPTVGNVNQGLEIVKKENCDSMVSIGGGSAHDCAKGIALLATNGGKIADYEGVDKSSKPQLPLIAINTTAGTASEMTRFAIITEETRHIKMAIIDKHTMPILSVNDPETMYGLPPSLTAATGMDALTHAVEAYVSTAANPITDACAVKCIELVNKYLKRAVDNGKDEEARDNMAYAEFLGGMAFNNASLGYVHAMAHQLGGFYGIPHGVCNAVLLAHVQKFNSRDPRANARLGDIAFHLGCEEHTAEAALDRISQLVLEVKIRPHLVDLGVKEKDFDVLVDHAMKDACGATNPIQPTHDEVKAIFKSAM</sequence>
<feature type="transit peptide" description="Mitochondrion" evidence="3">
    <location>
        <begin position="1"/>
        <end position="29"/>
    </location>
</feature>
<feature type="chain" id="PRO_0000087818" description="Alcohol dehydrogenase 4">
    <location>
        <begin position="30"/>
        <end position="422"/>
    </location>
</feature>
<feature type="binding site" evidence="2">
    <location>
        <position position="82"/>
    </location>
    <ligand>
        <name>NAD(+)</name>
        <dbReference type="ChEBI" id="CHEBI:57540"/>
    </ligand>
</feature>
<feature type="binding site" evidence="2">
    <location>
        <position position="114"/>
    </location>
    <ligand>
        <name>NAD(+)</name>
        <dbReference type="ChEBI" id="CHEBI:57540"/>
    </ligand>
</feature>
<feature type="binding site" evidence="2">
    <location>
        <position position="141"/>
    </location>
    <ligand>
        <name>NAD(+)</name>
        <dbReference type="ChEBI" id="CHEBI:57540"/>
    </ligand>
</feature>
<feature type="binding site" evidence="2">
    <location>
        <position position="142"/>
    </location>
    <ligand>
        <name>NAD(+)</name>
        <dbReference type="ChEBI" id="CHEBI:57540"/>
    </ligand>
</feature>
<feature type="binding site" evidence="2">
    <location>
        <position position="181"/>
    </location>
    <ligand>
        <name>NAD(+)</name>
        <dbReference type="ChEBI" id="CHEBI:57540"/>
    </ligand>
</feature>
<feature type="binding site" evidence="2">
    <location>
        <position position="182"/>
    </location>
    <ligand>
        <name>NAD(+)</name>
        <dbReference type="ChEBI" id="CHEBI:57540"/>
    </ligand>
</feature>
<feature type="binding site" evidence="2">
    <location>
        <position position="190"/>
    </location>
    <ligand>
        <name>NAD(+)</name>
        <dbReference type="ChEBI" id="CHEBI:57540"/>
    </ligand>
</feature>
<feature type="binding site" evidence="2">
    <location>
        <position position="192"/>
    </location>
    <ligand>
        <name>NAD(+)</name>
        <dbReference type="ChEBI" id="CHEBI:57540"/>
    </ligand>
</feature>
<feature type="binding site" evidence="2">
    <location>
        <position position="203"/>
    </location>
    <ligand>
        <name>NAD(+)</name>
        <dbReference type="ChEBI" id="CHEBI:57540"/>
    </ligand>
</feature>
<feature type="binding site" evidence="2">
    <location>
        <position position="225"/>
    </location>
    <ligand>
        <name>NAD(+)</name>
        <dbReference type="ChEBI" id="CHEBI:57540"/>
    </ligand>
</feature>
<feature type="binding site" evidence="2">
    <location>
        <position position="237"/>
    </location>
    <ligand>
        <name>Fe(2+)</name>
        <dbReference type="ChEBI" id="CHEBI:29033"/>
    </ligand>
</feature>
<feature type="binding site" evidence="2">
    <location>
        <position position="241"/>
    </location>
    <ligand>
        <name>Fe(2+)</name>
        <dbReference type="ChEBI" id="CHEBI:29033"/>
    </ligand>
</feature>
<feature type="binding site" evidence="2">
    <location>
        <position position="306"/>
    </location>
    <ligand>
        <name>Fe(2+)</name>
        <dbReference type="ChEBI" id="CHEBI:29033"/>
    </ligand>
</feature>
<feature type="binding site" evidence="2">
    <location>
        <position position="310"/>
    </location>
    <ligand>
        <name>NAD(+)</name>
        <dbReference type="ChEBI" id="CHEBI:57540"/>
    </ligand>
</feature>
<feature type="binding site" evidence="2">
    <location>
        <position position="320"/>
    </location>
    <ligand>
        <name>Fe(2+)</name>
        <dbReference type="ChEBI" id="CHEBI:29033"/>
    </ligand>
</feature>
<feature type="binding site" evidence="2">
    <location>
        <position position="320"/>
    </location>
    <ligand>
        <name>NAD(+)</name>
        <dbReference type="ChEBI" id="CHEBI:57540"/>
    </ligand>
</feature>
<reference key="1">
    <citation type="journal article" date="2002" name="Nature">
        <title>The genome sequence of Schizosaccharomyces pombe.</title>
        <authorList>
            <person name="Wood V."/>
            <person name="Gwilliam R."/>
            <person name="Rajandream M.A."/>
            <person name="Lyne M.H."/>
            <person name="Lyne R."/>
            <person name="Stewart A."/>
            <person name="Sgouros J.G."/>
            <person name="Peat N."/>
            <person name="Hayles J."/>
            <person name="Baker S.G."/>
            <person name="Basham D."/>
            <person name="Bowman S."/>
            <person name="Brooks K."/>
            <person name="Brown D."/>
            <person name="Brown S."/>
            <person name="Chillingworth T."/>
            <person name="Churcher C.M."/>
            <person name="Collins M."/>
            <person name="Connor R."/>
            <person name="Cronin A."/>
            <person name="Davis P."/>
            <person name="Feltwell T."/>
            <person name="Fraser A."/>
            <person name="Gentles S."/>
            <person name="Goble A."/>
            <person name="Hamlin N."/>
            <person name="Harris D.E."/>
            <person name="Hidalgo J."/>
            <person name="Hodgson G."/>
            <person name="Holroyd S."/>
            <person name="Hornsby T."/>
            <person name="Howarth S."/>
            <person name="Huckle E.J."/>
            <person name="Hunt S."/>
            <person name="Jagels K."/>
            <person name="James K.D."/>
            <person name="Jones L."/>
            <person name="Jones M."/>
            <person name="Leather S."/>
            <person name="McDonald S."/>
            <person name="McLean J."/>
            <person name="Mooney P."/>
            <person name="Moule S."/>
            <person name="Mungall K.L."/>
            <person name="Murphy L.D."/>
            <person name="Niblett D."/>
            <person name="Odell C."/>
            <person name="Oliver K."/>
            <person name="O'Neil S."/>
            <person name="Pearson D."/>
            <person name="Quail M.A."/>
            <person name="Rabbinowitsch E."/>
            <person name="Rutherford K.M."/>
            <person name="Rutter S."/>
            <person name="Saunders D."/>
            <person name="Seeger K."/>
            <person name="Sharp S."/>
            <person name="Skelton J."/>
            <person name="Simmonds M.N."/>
            <person name="Squares R."/>
            <person name="Squares S."/>
            <person name="Stevens K."/>
            <person name="Taylor K."/>
            <person name="Taylor R.G."/>
            <person name="Tivey A."/>
            <person name="Walsh S.V."/>
            <person name="Warren T."/>
            <person name="Whitehead S."/>
            <person name="Woodward J.R."/>
            <person name="Volckaert G."/>
            <person name="Aert R."/>
            <person name="Robben J."/>
            <person name="Grymonprez B."/>
            <person name="Weltjens I."/>
            <person name="Vanstreels E."/>
            <person name="Rieger M."/>
            <person name="Schaefer M."/>
            <person name="Mueller-Auer S."/>
            <person name="Gabel C."/>
            <person name="Fuchs M."/>
            <person name="Duesterhoeft A."/>
            <person name="Fritzc C."/>
            <person name="Holzer E."/>
            <person name="Moestl D."/>
            <person name="Hilbert H."/>
            <person name="Borzym K."/>
            <person name="Langer I."/>
            <person name="Beck A."/>
            <person name="Lehrach H."/>
            <person name="Reinhardt R."/>
            <person name="Pohl T.M."/>
            <person name="Eger P."/>
            <person name="Zimmermann W."/>
            <person name="Wedler H."/>
            <person name="Wambutt R."/>
            <person name="Purnelle B."/>
            <person name="Goffeau A."/>
            <person name="Cadieu E."/>
            <person name="Dreano S."/>
            <person name="Gloux S."/>
            <person name="Lelaure V."/>
            <person name="Mottier S."/>
            <person name="Galibert F."/>
            <person name="Aves S.J."/>
            <person name="Xiang Z."/>
            <person name="Hunt C."/>
            <person name="Moore K."/>
            <person name="Hurst S.M."/>
            <person name="Lucas M."/>
            <person name="Rochet M."/>
            <person name="Gaillardin C."/>
            <person name="Tallada V.A."/>
            <person name="Garzon A."/>
            <person name="Thode G."/>
            <person name="Daga R.R."/>
            <person name="Cruzado L."/>
            <person name="Jimenez J."/>
            <person name="Sanchez M."/>
            <person name="del Rey F."/>
            <person name="Benito J."/>
            <person name="Dominguez A."/>
            <person name="Revuelta J.L."/>
            <person name="Moreno S."/>
            <person name="Armstrong J."/>
            <person name="Forsburg S.L."/>
            <person name="Cerutti L."/>
            <person name="Lowe T."/>
            <person name="McCombie W.R."/>
            <person name="Paulsen I."/>
            <person name="Potashkin J."/>
            <person name="Shpakovski G.V."/>
            <person name="Ussery D."/>
            <person name="Barrell B.G."/>
            <person name="Nurse P."/>
        </authorList>
    </citation>
    <scope>NUCLEOTIDE SEQUENCE [LARGE SCALE GENOMIC DNA]</scope>
    <source>
        <strain>972 / ATCC 24843</strain>
    </source>
</reference>
<reference key="2">
    <citation type="journal article" date="2004" name="FEMS Yeast Res.">
        <title>A distinct type of alcohol dehydrogenase, adh4+, complements ethanol fermentation in an adh1-deficient strain of Schizosaccharomyces pombe.</title>
        <authorList>
            <person name="Sakurai M."/>
            <person name="Tohda H."/>
            <person name="Kumagai H."/>
            <person name="Giga-Hama Y."/>
        </authorList>
    </citation>
    <scope>FUNCTION</scope>
    <scope>CATALYTIC ACTIVITY</scope>
</reference>
<reference key="3">
    <citation type="journal article" date="2006" name="Nat. Biotechnol.">
        <title>ORFeome cloning and global analysis of protein localization in the fission yeast Schizosaccharomyces pombe.</title>
        <authorList>
            <person name="Matsuyama A."/>
            <person name="Arai R."/>
            <person name="Yashiroda Y."/>
            <person name="Shirai A."/>
            <person name="Kamata A."/>
            <person name="Sekido S."/>
            <person name="Kobayashi Y."/>
            <person name="Hashimoto A."/>
            <person name="Hamamoto M."/>
            <person name="Hiraoka Y."/>
            <person name="Horinouchi S."/>
            <person name="Yoshida M."/>
        </authorList>
    </citation>
    <scope>SUBCELLULAR LOCATION [LARGE SCALE ANALYSIS]</scope>
</reference>
<reference key="4">
    <citation type="journal article" date="2007" name="Biochem. J.">
        <title>Identification of a mitochondrial alcohol dehydrogenase in Schizosaccharomyces pombe: new insights into energy metabolism.</title>
        <authorList>
            <person name="Crichton P.G."/>
            <person name="Affourtit C."/>
            <person name="Moore A.L."/>
        </authorList>
    </citation>
    <scope>FUNCTION</scope>
    <scope>CATALYTIC ACTIVITY</scope>
    <scope>SUBCELLULAR LOCATION</scope>
</reference>
<reference key="5">
    <citation type="journal article" date="2008" name="Eukaryot. Cell">
        <title>Response of Schizosaccharomyces pombe to zinc deficiency.</title>
        <authorList>
            <person name="Dainty S.J."/>
            <person name="Kennedy C.A."/>
            <person name="Watt S."/>
            <person name="Baehler J."/>
            <person name="Whitehall S.K."/>
        </authorList>
    </citation>
    <scope>INDUCTION</scope>
</reference>
<organism>
    <name type="scientific">Schizosaccharomyces pombe (strain 972 / ATCC 24843)</name>
    <name type="common">Fission yeast</name>
    <dbReference type="NCBI Taxonomy" id="284812"/>
    <lineage>
        <taxon>Eukaryota</taxon>
        <taxon>Fungi</taxon>
        <taxon>Dikarya</taxon>
        <taxon>Ascomycota</taxon>
        <taxon>Taphrinomycotina</taxon>
        <taxon>Schizosaccharomycetes</taxon>
        <taxon>Schizosaccharomycetales</taxon>
        <taxon>Schizosaccharomycetaceae</taxon>
        <taxon>Schizosaccharomyces</taxon>
    </lineage>
</organism>
<comment type="function">
    <text evidence="4 6">Involved in ethanol oxidation in mitochondria.</text>
</comment>
<comment type="catalytic activity">
    <reaction evidence="4 6">
        <text>a primary alcohol + NAD(+) = an aldehyde + NADH + H(+)</text>
        <dbReference type="Rhea" id="RHEA:10736"/>
        <dbReference type="ChEBI" id="CHEBI:15378"/>
        <dbReference type="ChEBI" id="CHEBI:15734"/>
        <dbReference type="ChEBI" id="CHEBI:17478"/>
        <dbReference type="ChEBI" id="CHEBI:57540"/>
        <dbReference type="ChEBI" id="CHEBI:57945"/>
        <dbReference type="EC" id="1.1.1.1"/>
    </reaction>
    <physiologicalReaction direction="left-to-right" evidence="6">
        <dbReference type="Rhea" id="RHEA:10737"/>
    </physiologicalReaction>
</comment>
<comment type="catalytic activity">
    <reaction evidence="9 10">
        <text>a secondary alcohol + NAD(+) = a ketone + NADH + H(+)</text>
        <dbReference type="Rhea" id="RHEA:10740"/>
        <dbReference type="ChEBI" id="CHEBI:15378"/>
        <dbReference type="ChEBI" id="CHEBI:17087"/>
        <dbReference type="ChEBI" id="CHEBI:35681"/>
        <dbReference type="ChEBI" id="CHEBI:57540"/>
        <dbReference type="ChEBI" id="CHEBI:57945"/>
        <dbReference type="EC" id="1.1.1.1"/>
    </reaction>
    <physiologicalReaction direction="left-to-right" evidence="10">
        <dbReference type="Rhea" id="RHEA:10741"/>
    </physiologicalReaction>
</comment>
<comment type="catalytic activity">
    <reaction evidence="4 6">
        <text>ethanol + NAD(+) = acetaldehyde + NADH + H(+)</text>
        <dbReference type="Rhea" id="RHEA:25290"/>
        <dbReference type="ChEBI" id="CHEBI:15343"/>
        <dbReference type="ChEBI" id="CHEBI:15378"/>
        <dbReference type="ChEBI" id="CHEBI:16236"/>
        <dbReference type="ChEBI" id="CHEBI:57540"/>
        <dbReference type="ChEBI" id="CHEBI:57945"/>
        <dbReference type="EC" id="1.1.1.1"/>
    </reaction>
    <physiologicalReaction direction="left-to-right" evidence="6">
        <dbReference type="Rhea" id="RHEA:25291"/>
    </physiologicalReaction>
    <physiologicalReaction direction="right-to-left" evidence="4">
        <dbReference type="Rhea" id="RHEA:25292"/>
    </physiologicalReaction>
</comment>
<comment type="cofactor">
    <cofactor evidence="1">
        <name>Zn(2+)</name>
        <dbReference type="ChEBI" id="CHEBI:29105"/>
    </cofactor>
</comment>
<comment type="subcellular location">
    <subcellularLocation>
        <location evidence="5 6">Mitochondrion matrix</location>
    </subcellularLocation>
</comment>
<comment type="induction">
    <text evidence="7">Induced in response to zinc deficiency.</text>
</comment>
<comment type="similarity">
    <text evidence="8">Belongs to the iron-containing alcohol dehydrogenase family.</text>
</comment>